<feature type="chain" id="PRO_1000091172" description="D-alanine--D-alanine ligase">
    <location>
        <begin position="1"/>
        <end position="366"/>
    </location>
</feature>
<feature type="domain" description="ATP-grasp" evidence="2">
    <location>
        <begin position="146"/>
        <end position="352"/>
    </location>
</feature>
<feature type="binding site" evidence="2">
    <location>
        <begin position="179"/>
        <end position="234"/>
    </location>
    <ligand>
        <name>ATP</name>
        <dbReference type="ChEBI" id="CHEBI:30616"/>
    </ligand>
</feature>
<feature type="binding site" evidence="2">
    <location>
        <position position="305"/>
    </location>
    <ligand>
        <name>Mg(2+)</name>
        <dbReference type="ChEBI" id="CHEBI:18420"/>
        <label>1</label>
    </ligand>
</feature>
<feature type="binding site" evidence="2">
    <location>
        <position position="319"/>
    </location>
    <ligand>
        <name>Mg(2+)</name>
        <dbReference type="ChEBI" id="CHEBI:18420"/>
        <label>1</label>
    </ligand>
</feature>
<feature type="binding site" evidence="2">
    <location>
        <position position="319"/>
    </location>
    <ligand>
        <name>Mg(2+)</name>
        <dbReference type="ChEBI" id="CHEBI:18420"/>
        <label>2</label>
    </ligand>
</feature>
<feature type="binding site" evidence="2">
    <location>
        <position position="321"/>
    </location>
    <ligand>
        <name>Mg(2+)</name>
        <dbReference type="ChEBI" id="CHEBI:18420"/>
        <label>2</label>
    </ligand>
</feature>
<reference key="1">
    <citation type="submission" date="2008-06" db="EMBL/GenBank/DDBJ databases">
        <title>Complete sequence of Chloroherpeton thalassium ATCC 35110.</title>
        <authorList>
            <consortium name="US DOE Joint Genome Institute"/>
            <person name="Lucas S."/>
            <person name="Copeland A."/>
            <person name="Lapidus A."/>
            <person name="Glavina del Rio T."/>
            <person name="Dalin E."/>
            <person name="Tice H."/>
            <person name="Bruce D."/>
            <person name="Goodwin L."/>
            <person name="Pitluck S."/>
            <person name="Schmutz J."/>
            <person name="Larimer F."/>
            <person name="Land M."/>
            <person name="Hauser L."/>
            <person name="Kyrpides N."/>
            <person name="Mikhailova N."/>
            <person name="Liu Z."/>
            <person name="Li T."/>
            <person name="Zhao F."/>
            <person name="Overmann J."/>
            <person name="Bryant D.A."/>
            <person name="Richardson P."/>
        </authorList>
    </citation>
    <scope>NUCLEOTIDE SEQUENCE [LARGE SCALE GENOMIC DNA]</scope>
    <source>
        <strain>ATCC 35110 / GB-78</strain>
    </source>
</reference>
<accession>B3QU24</accession>
<proteinExistence type="inferred from homology"/>
<organism>
    <name type="scientific">Chloroherpeton thalassium (strain ATCC 35110 / GB-78)</name>
    <dbReference type="NCBI Taxonomy" id="517418"/>
    <lineage>
        <taxon>Bacteria</taxon>
        <taxon>Pseudomonadati</taxon>
        <taxon>Chlorobiota</taxon>
        <taxon>Chlorobiia</taxon>
        <taxon>Chlorobiales</taxon>
        <taxon>Chloroherpetonaceae</taxon>
        <taxon>Chloroherpeton</taxon>
    </lineage>
</organism>
<keyword id="KW-0067">ATP-binding</keyword>
<keyword id="KW-0133">Cell shape</keyword>
<keyword id="KW-0961">Cell wall biogenesis/degradation</keyword>
<keyword id="KW-0963">Cytoplasm</keyword>
<keyword id="KW-0436">Ligase</keyword>
<keyword id="KW-0460">Magnesium</keyword>
<keyword id="KW-0464">Manganese</keyword>
<keyword id="KW-0479">Metal-binding</keyword>
<keyword id="KW-0547">Nucleotide-binding</keyword>
<keyword id="KW-0573">Peptidoglycan synthesis</keyword>
<keyword id="KW-1185">Reference proteome</keyword>
<name>DDL_CHLT3</name>
<protein>
    <recommendedName>
        <fullName evidence="2">D-alanine--D-alanine ligase</fullName>
        <ecNumber evidence="2">6.3.2.4</ecNumber>
    </recommendedName>
    <alternativeName>
        <fullName evidence="2">D-Ala-D-Ala ligase</fullName>
    </alternativeName>
    <alternativeName>
        <fullName evidence="2">D-alanylalanine synthetase</fullName>
    </alternativeName>
</protein>
<evidence type="ECO:0000250" key="1"/>
<evidence type="ECO:0000255" key="2">
    <source>
        <dbReference type="HAMAP-Rule" id="MF_00047"/>
    </source>
</evidence>
<dbReference type="EC" id="6.3.2.4" evidence="2"/>
<dbReference type="EMBL" id="CP001100">
    <property type="protein sequence ID" value="ACF12822.1"/>
    <property type="molecule type" value="Genomic_DNA"/>
</dbReference>
<dbReference type="RefSeq" id="WP_012498906.1">
    <property type="nucleotide sequence ID" value="NC_011026.1"/>
</dbReference>
<dbReference type="SMR" id="B3QU24"/>
<dbReference type="STRING" id="517418.Ctha_0351"/>
<dbReference type="KEGG" id="cts:Ctha_0351"/>
<dbReference type="eggNOG" id="COG1181">
    <property type="taxonomic scope" value="Bacteria"/>
</dbReference>
<dbReference type="HOGENOM" id="CLU_039268_0_0_10"/>
<dbReference type="OrthoDB" id="9813261at2"/>
<dbReference type="UniPathway" id="UPA00219"/>
<dbReference type="Proteomes" id="UP000001208">
    <property type="component" value="Chromosome"/>
</dbReference>
<dbReference type="GO" id="GO:0005829">
    <property type="term" value="C:cytosol"/>
    <property type="evidence" value="ECO:0007669"/>
    <property type="project" value="TreeGrafter"/>
</dbReference>
<dbReference type="GO" id="GO:0005524">
    <property type="term" value="F:ATP binding"/>
    <property type="evidence" value="ECO:0007669"/>
    <property type="project" value="UniProtKB-KW"/>
</dbReference>
<dbReference type="GO" id="GO:0008716">
    <property type="term" value="F:D-alanine-D-alanine ligase activity"/>
    <property type="evidence" value="ECO:0007669"/>
    <property type="project" value="UniProtKB-UniRule"/>
</dbReference>
<dbReference type="GO" id="GO:0046872">
    <property type="term" value="F:metal ion binding"/>
    <property type="evidence" value="ECO:0007669"/>
    <property type="project" value="UniProtKB-KW"/>
</dbReference>
<dbReference type="GO" id="GO:0071555">
    <property type="term" value="P:cell wall organization"/>
    <property type="evidence" value="ECO:0007669"/>
    <property type="project" value="UniProtKB-KW"/>
</dbReference>
<dbReference type="GO" id="GO:0009252">
    <property type="term" value="P:peptidoglycan biosynthetic process"/>
    <property type="evidence" value="ECO:0007669"/>
    <property type="project" value="UniProtKB-UniRule"/>
</dbReference>
<dbReference type="GO" id="GO:0008360">
    <property type="term" value="P:regulation of cell shape"/>
    <property type="evidence" value="ECO:0007669"/>
    <property type="project" value="UniProtKB-KW"/>
</dbReference>
<dbReference type="FunFam" id="3.30.1490.20:FF:000007">
    <property type="entry name" value="D-alanine--D-alanine ligase"/>
    <property type="match status" value="1"/>
</dbReference>
<dbReference type="FunFam" id="3.30.470.20:FF:000008">
    <property type="entry name" value="D-alanine--D-alanine ligase"/>
    <property type="match status" value="1"/>
</dbReference>
<dbReference type="Gene3D" id="3.40.50.20">
    <property type="match status" value="1"/>
</dbReference>
<dbReference type="Gene3D" id="3.30.1490.20">
    <property type="entry name" value="ATP-grasp fold, A domain"/>
    <property type="match status" value="1"/>
</dbReference>
<dbReference type="Gene3D" id="3.30.470.20">
    <property type="entry name" value="ATP-grasp fold, B domain"/>
    <property type="match status" value="1"/>
</dbReference>
<dbReference type="HAMAP" id="MF_00047">
    <property type="entry name" value="Dala_Dala_lig"/>
    <property type="match status" value="1"/>
</dbReference>
<dbReference type="InterPro" id="IPR011761">
    <property type="entry name" value="ATP-grasp"/>
</dbReference>
<dbReference type="InterPro" id="IPR013815">
    <property type="entry name" value="ATP_grasp_subdomain_1"/>
</dbReference>
<dbReference type="InterPro" id="IPR000291">
    <property type="entry name" value="D-Ala_lig_Van_CS"/>
</dbReference>
<dbReference type="InterPro" id="IPR005905">
    <property type="entry name" value="D_ala_D_ala"/>
</dbReference>
<dbReference type="InterPro" id="IPR011095">
    <property type="entry name" value="Dala_Dala_lig_C"/>
</dbReference>
<dbReference type="InterPro" id="IPR011127">
    <property type="entry name" value="Dala_Dala_lig_N"/>
</dbReference>
<dbReference type="InterPro" id="IPR016185">
    <property type="entry name" value="PreATP-grasp_dom_sf"/>
</dbReference>
<dbReference type="NCBIfam" id="TIGR01205">
    <property type="entry name" value="D_ala_D_alaTIGR"/>
    <property type="match status" value="1"/>
</dbReference>
<dbReference type="NCBIfam" id="NF002378">
    <property type="entry name" value="PRK01372.1"/>
    <property type="match status" value="1"/>
</dbReference>
<dbReference type="NCBIfam" id="NF002528">
    <property type="entry name" value="PRK01966.1-4"/>
    <property type="match status" value="1"/>
</dbReference>
<dbReference type="PANTHER" id="PTHR23132">
    <property type="entry name" value="D-ALANINE--D-ALANINE LIGASE"/>
    <property type="match status" value="1"/>
</dbReference>
<dbReference type="PANTHER" id="PTHR23132:SF25">
    <property type="entry name" value="D-ALANINE--D-ALANINE LIGASE A"/>
    <property type="match status" value="1"/>
</dbReference>
<dbReference type="Pfam" id="PF07478">
    <property type="entry name" value="Dala_Dala_lig_C"/>
    <property type="match status" value="1"/>
</dbReference>
<dbReference type="Pfam" id="PF01820">
    <property type="entry name" value="Dala_Dala_lig_N"/>
    <property type="match status" value="1"/>
</dbReference>
<dbReference type="PIRSF" id="PIRSF039102">
    <property type="entry name" value="Ddl/VanB"/>
    <property type="match status" value="1"/>
</dbReference>
<dbReference type="SUPFAM" id="SSF56059">
    <property type="entry name" value="Glutathione synthetase ATP-binding domain-like"/>
    <property type="match status" value="1"/>
</dbReference>
<dbReference type="SUPFAM" id="SSF52440">
    <property type="entry name" value="PreATP-grasp domain"/>
    <property type="match status" value="1"/>
</dbReference>
<dbReference type="PROSITE" id="PS50975">
    <property type="entry name" value="ATP_GRASP"/>
    <property type="match status" value="1"/>
</dbReference>
<dbReference type="PROSITE" id="PS00843">
    <property type="entry name" value="DALA_DALA_LIGASE_1"/>
    <property type="match status" value="1"/>
</dbReference>
<dbReference type="PROSITE" id="PS00844">
    <property type="entry name" value="DALA_DALA_LIGASE_2"/>
    <property type="match status" value="1"/>
</dbReference>
<comment type="function">
    <text evidence="2">Cell wall formation.</text>
</comment>
<comment type="catalytic activity">
    <reaction evidence="2">
        <text>2 D-alanine + ATP = D-alanyl-D-alanine + ADP + phosphate + H(+)</text>
        <dbReference type="Rhea" id="RHEA:11224"/>
        <dbReference type="ChEBI" id="CHEBI:15378"/>
        <dbReference type="ChEBI" id="CHEBI:30616"/>
        <dbReference type="ChEBI" id="CHEBI:43474"/>
        <dbReference type="ChEBI" id="CHEBI:57416"/>
        <dbReference type="ChEBI" id="CHEBI:57822"/>
        <dbReference type="ChEBI" id="CHEBI:456216"/>
        <dbReference type="EC" id="6.3.2.4"/>
    </reaction>
</comment>
<comment type="cofactor">
    <cofactor evidence="1">
        <name>Mg(2+)</name>
        <dbReference type="ChEBI" id="CHEBI:18420"/>
    </cofactor>
    <cofactor evidence="1">
        <name>Mn(2+)</name>
        <dbReference type="ChEBI" id="CHEBI:29035"/>
    </cofactor>
    <text evidence="1">Binds 2 magnesium or manganese ions per subunit.</text>
</comment>
<comment type="pathway">
    <text evidence="2">Cell wall biogenesis; peptidoglycan biosynthesis.</text>
</comment>
<comment type="subcellular location">
    <subcellularLocation>
        <location evidence="2">Cytoplasm</location>
    </subcellularLocation>
</comment>
<comment type="similarity">
    <text evidence="2">Belongs to the D-alanine--D-alanine ligase family.</text>
</comment>
<gene>
    <name evidence="2" type="primary">ddl</name>
    <name type="ordered locus">Ctha_0351</name>
</gene>
<sequence length="366" mass="40670">MNKKKVALLFGGRSSEHEISVISARSIANALDKTKYKIQPIYITKAGKWLGAEASRKILAMDFESAIKSPTKKEIHLIEKEIVLLCQNSQFRFDFRTAKIDVAFPVLHGPYGEDGTVQGLLEMFDVAYVGSGVLASAITMDKAVAKICFEHAGLQVGEYLAFLRREFEENRGSVVARAEKKLRYPMFVKPANMGSSVGISKAHNRNELIEAIELALAYDRKFLIEKAINAREMEVAVLGNDEPIASAVGEVVPCNEFYDYDAKYVKGSSEVIIPAQISEAFAGKLKAAALNAFVAADCEGMARVDFLVEKETNEIYINEINSIPGFTSISMYPKLFAQVGISYTELINRLIELALERYSERKLRKI</sequence>